<reference key="1">
    <citation type="journal article" date="1995" name="Proc. Natl. Acad. Sci. U.S.A.">
        <title>The nucleotide sequence of chromosome I from Saccharomyces cerevisiae.</title>
        <authorList>
            <person name="Bussey H."/>
            <person name="Kaback D.B."/>
            <person name="Zhong W.-W."/>
            <person name="Vo D.H."/>
            <person name="Clark M.W."/>
            <person name="Fortin N."/>
            <person name="Hall J."/>
            <person name="Ouellette B.F.F."/>
            <person name="Keng T."/>
            <person name="Barton A.B."/>
            <person name="Su Y."/>
            <person name="Davies C.J."/>
            <person name="Storms R.K."/>
        </authorList>
    </citation>
    <scope>NUCLEOTIDE SEQUENCE [LARGE SCALE GENOMIC DNA]</scope>
    <source>
        <strain>ATCC 204508 / S288c</strain>
    </source>
</reference>
<reference key="2">
    <citation type="journal article" date="2014" name="G3 (Bethesda)">
        <title>The reference genome sequence of Saccharomyces cerevisiae: Then and now.</title>
        <authorList>
            <person name="Engel S.R."/>
            <person name="Dietrich F.S."/>
            <person name="Fisk D.G."/>
            <person name="Binkley G."/>
            <person name="Balakrishnan R."/>
            <person name="Costanzo M.C."/>
            <person name="Dwight S.S."/>
            <person name="Hitz B.C."/>
            <person name="Karra K."/>
            <person name="Nash R.S."/>
            <person name="Weng S."/>
            <person name="Wong E.D."/>
            <person name="Lloyd P."/>
            <person name="Skrzypek M.S."/>
            <person name="Miyasato S.R."/>
            <person name="Simison M."/>
            <person name="Cherry J.M."/>
        </authorList>
    </citation>
    <scope>GENOME REANNOTATION</scope>
    <source>
        <strain>ATCC 204508 / S288c</strain>
    </source>
</reference>
<keyword id="KW-0472">Membrane</keyword>
<keyword id="KW-0732">Signal</keyword>
<keyword id="KW-0812">Transmembrane</keyword>
<keyword id="KW-1133">Transmembrane helix</keyword>
<sequence>MVSSFFMASTLLAISSCFNSSISRAKGYNDSLESESLEFDVVDVVDVVAAEGTAPAVVDLAPDIFRSFLTTQLFFDNQIPVVIVVEISSTLVLLLSAFLRNLVP</sequence>
<protein>
    <recommendedName>
        <fullName evidence="2">Putative uncharacterized membrane protein YAL016C-A</fullName>
    </recommendedName>
</protein>
<accession>A0A023PYC6</accession>
<proteinExistence type="uncertain"/>
<feature type="signal peptide" evidence="1">
    <location>
        <begin position="1"/>
        <end position="25"/>
    </location>
</feature>
<feature type="chain" id="PRO_0000430975" description="Putative uncharacterized membrane protein YAL016C-A">
    <location>
        <begin position="26"/>
        <end position="104"/>
    </location>
</feature>
<feature type="transmembrane region" description="Helical" evidence="1">
    <location>
        <begin position="79"/>
        <end position="99"/>
    </location>
</feature>
<evidence type="ECO:0000255" key="1"/>
<evidence type="ECO:0000305" key="2"/>
<evidence type="ECO:0000305" key="3">
    <source>
    </source>
</evidence>
<evidence type="ECO:0000312" key="4">
    <source>
        <dbReference type="SGD" id="S000028728"/>
    </source>
</evidence>
<gene>
    <name evidence="4" type="ordered locus">YAL016C-A</name>
</gene>
<dbReference type="EMBL" id="KJ412205">
    <property type="protein sequence ID" value="AHX39248.1"/>
    <property type="molecule type" value="Genomic_DNA"/>
</dbReference>
<dbReference type="STRING" id="4932.YAL016C-A"/>
<dbReference type="PaxDb" id="4932-YAL016C-A"/>
<dbReference type="EnsemblFungi" id="YAL016C-A_mRNA">
    <property type="protein sequence ID" value="YAL016C-A"/>
    <property type="gene ID" value="YAL016C-A"/>
</dbReference>
<dbReference type="AGR" id="SGD:S000028728"/>
<dbReference type="SGD" id="S000028728">
    <property type="gene designation" value="YAL016C-A"/>
</dbReference>
<dbReference type="HOGENOM" id="CLU_2251604_0_0_1"/>
<dbReference type="GO" id="GO:0016020">
    <property type="term" value="C:membrane"/>
    <property type="evidence" value="ECO:0007669"/>
    <property type="project" value="UniProtKB-SubCell"/>
</dbReference>
<name>YA16A_YEAST</name>
<organism>
    <name type="scientific">Saccharomyces cerevisiae (strain ATCC 204508 / S288c)</name>
    <name type="common">Baker's yeast</name>
    <dbReference type="NCBI Taxonomy" id="559292"/>
    <lineage>
        <taxon>Eukaryota</taxon>
        <taxon>Fungi</taxon>
        <taxon>Dikarya</taxon>
        <taxon>Ascomycota</taxon>
        <taxon>Saccharomycotina</taxon>
        <taxon>Saccharomycetes</taxon>
        <taxon>Saccharomycetales</taxon>
        <taxon>Saccharomycetaceae</taxon>
        <taxon>Saccharomyces</taxon>
    </lineage>
</organism>
<comment type="subcellular location">
    <subcellularLocation>
        <location evidence="1">Membrane</location>
        <topology evidence="1">Single-pass membrane protein</topology>
    </subcellularLocation>
</comment>
<comment type="miscellaneous">
    <text evidence="2">Partially overlaps TPD3.</text>
</comment>
<comment type="caution">
    <text evidence="3">Product of a dubious gene prediction unlikely to encode a functional protein. Because of that it is not part of the S.cerevisiae S288c complete/reference proteome set.</text>
</comment>